<proteinExistence type="evidence at transcript level"/>
<keyword id="KW-0119">Carbohydrate metabolism</keyword>
<keyword id="KW-0961">Cell wall biogenesis/degradation</keyword>
<keyword id="KW-1015">Disulfide bond</keyword>
<keyword id="KW-0325">Glycoprotein</keyword>
<keyword id="KW-0326">Glycosidase</keyword>
<keyword id="KW-0378">Hydrolase</keyword>
<keyword id="KW-0624">Polysaccharide degradation</keyword>
<keyword id="KW-1185">Reference proteome</keyword>
<keyword id="KW-0677">Repeat</keyword>
<keyword id="KW-0964">Secreted</keyword>
<keyword id="KW-0732">Signal</keyword>
<evidence type="ECO:0000250" key="1"/>
<evidence type="ECO:0000255" key="2"/>
<evidence type="ECO:0000269" key="3">
    <source>
    </source>
</evidence>
<evidence type="ECO:0000305" key="4"/>
<organism>
    <name type="scientific">Aspergillus niger (strain ATCC MYA-4892 / CBS 513.88 / FGSC A1513)</name>
    <dbReference type="NCBI Taxonomy" id="425011"/>
    <lineage>
        <taxon>Eukaryota</taxon>
        <taxon>Fungi</taxon>
        <taxon>Dikarya</taxon>
        <taxon>Ascomycota</taxon>
        <taxon>Pezizomycotina</taxon>
        <taxon>Eurotiomycetes</taxon>
        <taxon>Eurotiomycetidae</taxon>
        <taxon>Eurotiales</taxon>
        <taxon>Aspergillaceae</taxon>
        <taxon>Aspergillus</taxon>
        <taxon>Aspergillus subgen. Circumdati</taxon>
    </lineage>
</organism>
<reference key="1">
    <citation type="journal article" date="2006" name="Biochem. J.">
        <title>A new group of exo-acting family 28 glycoside hydrolases of Aspergillus niger that are involved in pectin degradation.</title>
        <authorList>
            <person name="Martens-Uzunova E.S."/>
            <person name="Zandleven J.S."/>
            <person name="Benen J.A."/>
            <person name="Awad H."/>
            <person name="Kools H.J."/>
            <person name="Beldman G."/>
            <person name="Voragen A.G."/>
            <person name="Van den Berg J.A."/>
            <person name="Schaap P.J."/>
        </authorList>
    </citation>
    <scope>NUCLEOTIDE SEQUENCE [GENOMIC DNA]</scope>
    <scope>INDUCTION</scope>
</reference>
<reference key="2">
    <citation type="journal article" date="2007" name="Nat. Biotechnol.">
        <title>Genome sequencing and analysis of the versatile cell factory Aspergillus niger CBS 513.88.</title>
        <authorList>
            <person name="Pel H.J."/>
            <person name="de Winde J.H."/>
            <person name="Archer D.B."/>
            <person name="Dyer P.S."/>
            <person name="Hofmann G."/>
            <person name="Schaap P.J."/>
            <person name="Turner G."/>
            <person name="de Vries R.P."/>
            <person name="Albang R."/>
            <person name="Albermann K."/>
            <person name="Andersen M.R."/>
            <person name="Bendtsen J.D."/>
            <person name="Benen J.A.E."/>
            <person name="van den Berg M."/>
            <person name="Breestraat S."/>
            <person name="Caddick M.X."/>
            <person name="Contreras R."/>
            <person name="Cornell M."/>
            <person name="Coutinho P.M."/>
            <person name="Danchin E.G.J."/>
            <person name="Debets A.J.M."/>
            <person name="Dekker P."/>
            <person name="van Dijck P.W.M."/>
            <person name="van Dijk A."/>
            <person name="Dijkhuizen L."/>
            <person name="Driessen A.J.M."/>
            <person name="d'Enfert C."/>
            <person name="Geysens S."/>
            <person name="Goosen C."/>
            <person name="Groot G.S.P."/>
            <person name="de Groot P.W.J."/>
            <person name="Guillemette T."/>
            <person name="Henrissat B."/>
            <person name="Herweijer M."/>
            <person name="van den Hombergh J.P.T.W."/>
            <person name="van den Hondel C.A.M.J.J."/>
            <person name="van der Heijden R.T.J.M."/>
            <person name="van der Kaaij R.M."/>
            <person name="Klis F.M."/>
            <person name="Kools H.J."/>
            <person name="Kubicek C.P."/>
            <person name="van Kuyk P.A."/>
            <person name="Lauber J."/>
            <person name="Lu X."/>
            <person name="van der Maarel M.J.E.C."/>
            <person name="Meulenberg R."/>
            <person name="Menke H."/>
            <person name="Mortimer M.A."/>
            <person name="Nielsen J."/>
            <person name="Oliver S.G."/>
            <person name="Olsthoorn M."/>
            <person name="Pal K."/>
            <person name="van Peij N.N.M.E."/>
            <person name="Ram A.F.J."/>
            <person name="Rinas U."/>
            <person name="Roubos J.A."/>
            <person name="Sagt C.M.J."/>
            <person name="Schmoll M."/>
            <person name="Sun J."/>
            <person name="Ussery D."/>
            <person name="Varga J."/>
            <person name="Vervecken W."/>
            <person name="van de Vondervoort P.J.J."/>
            <person name="Wedler H."/>
            <person name="Woesten H.A.B."/>
            <person name="Zeng A.-P."/>
            <person name="van Ooyen A.J.J."/>
            <person name="Visser J."/>
            <person name="Stam H."/>
        </authorList>
    </citation>
    <scope>NUCLEOTIDE SEQUENCE [LARGE SCALE GENOMIC DNA]</scope>
    <source>
        <strain>ATCC MYA-4892 / CBS 513.88 / FGSC A1513</strain>
    </source>
</reference>
<protein>
    <recommendedName>
        <fullName>Putative galacturan 1,4-alpha-galacturonidase C</fullName>
        <ecNumber>3.2.1.67</ecNumber>
    </recommendedName>
    <alternativeName>
        <fullName>Exopolygalacturonase C</fullName>
    </alternativeName>
    <alternativeName>
        <fullName>Exorhamnogalacturonase C</fullName>
    </alternativeName>
    <alternativeName>
        <fullName>Poly(1,4-alpha-D-galacturonide)galacturonohydrolase C</fullName>
    </alternativeName>
</protein>
<name>RGXC_ASPNC</name>
<sequence length="423" mass="45904">MQLRASVLLSFLGLASVGHAGNVENNHNVCTVRANGGHQDDVPNIMAAFKECGNGGTIIFPEDQSYWIATRLHPTLKDVAIEWRGKWTFSDNLTYWRNNSYPIAFQNHHAGFIISGDNITINGYGTGGIDGNGNTWYTAEKGDTQPGRPMPFVFWNVSEVIVDSFYVKDPPLWSVNIMNGTNMRFNNIYCNATAVDAPWGDNWVQNTDGFDTMDATNIQLTNFVYQGGDDCIAIKPRSYNIDIQNVTCRGGNGIAIGSLGQYLEDSSVANIRVDKVNIIRYNEDMHNSAYLKTWVGALVPQSSYESAGVPRGDGWGSIRNVLFSNFNVQGASAGPSISQDSGDNGSYAGTSKMSISNVAFVNFTGWVDTEKSVVSTVSCSEVHPCYNIDYDNVVLYPGKNATTAGTGSCKYTADGGVHGLSGC</sequence>
<dbReference type="EC" id="3.2.1.67"/>
<dbReference type="EMBL" id="DQ374428">
    <property type="protein sequence ID" value="ABD61568.1"/>
    <property type="molecule type" value="Genomic_DNA"/>
</dbReference>
<dbReference type="EMBL" id="AM270408">
    <property type="protein sequence ID" value="CAK43283.1"/>
    <property type="molecule type" value="Genomic_DNA"/>
</dbReference>
<dbReference type="RefSeq" id="XP_001398939.1">
    <property type="nucleotide sequence ID" value="XM_001398902.1"/>
</dbReference>
<dbReference type="SMR" id="A2RAY7"/>
<dbReference type="CAZy" id="GH28">
    <property type="family name" value="Glycoside Hydrolase Family 28"/>
</dbReference>
<dbReference type="GlyCosmos" id="A2RAY7">
    <property type="glycosylation" value="10 sites, No reported glycans"/>
</dbReference>
<dbReference type="EnsemblFungi" id="CAK43283">
    <property type="protein sequence ID" value="CAK43283"/>
    <property type="gene ID" value="An18g04810"/>
</dbReference>
<dbReference type="GeneID" id="4990047"/>
<dbReference type="KEGG" id="ang:An18g04810"/>
<dbReference type="VEuPathDB" id="FungiDB:An18g04810"/>
<dbReference type="HOGENOM" id="CLU_016031_1_1_1"/>
<dbReference type="Proteomes" id="UP000006706">
    <property type="component" value="Chromosome 8L"/>
</dbReference>
<dbReference type="GO" id="GO:0005576">
    <property type="term" value="C:extracellular region"/>
    <property type="evidence" value="ECO:0007669"/>
    <property type="project" value="UniProtKB-SubCell"/>
</dbReference>
<dbReference type="GO" id="GO:0047911">
    <property type="term" value="F:galacturan 1,4-alpha-galacturonidase activity"/>
    <property type="evidence" value="ECO:0007669"/>
    <property type="project" value="UniProtKB-EC"/>
</dbReference>
<dbReference type="GO" id="GO:0004650">
    <property type="term" value="F:polygalacturonase activity"/>
    <property type="evidence" value="ECO:0007669"/>
    <property type="project" value="InterPro"/>
</dbReference>
<dbReference type="GO" id="GO:0071555">
    <property type="term" value="P:cell wall organization"/>
    <property type="evidence" value="ECO:0007669"/>
    <property type="project" value="UniProtKB-KW"/>
</dbReference>
<dbReference type="GO" id="GO:0000272">
    <property type="term" value="P:polysaccharide catabolic process"/>
    <property type="evidence" value="ECO:0007669"/>
    <property type="project" value="UniProtKB-KW"/>
</dbReference>
<dbReference type="Gene3D" id="2.160.20.10">
    <property type="entry name" value="Single-stranded right-handed beta-helix, Pectin lyase-like"/>
    <property type="match status" value="1"/>
</dbReference>
<dbReference type="InterPro" id="IPR000743">
    <property type="entry name" value="Glyco_hydro_28"/>
</dbReference>
<dbReference type="InterPro" id="IPR012334">
    <property type="entry name" value="Pectin_lyas_fold"/>
</dbReference>
<dbReference type="InterPro" id="IPR011050">
    <property type="entry name" value="Pectin_lyase_fold/virulence"/>
</dbReference>
<dbReference type="PANTHER" id="PTHR31736">
    <property type="match status" value="1"/>
</dbReference>
<dbReference type="PANTHER" id="PTHR31736:SF12">
    <property type="entry name" value="EXO-POLYGALACTURONASE, PUTATIVE-RELATED"/>
    <property type="match status" value="1"/>
</dbReference>
<dbReference type="Pfam" id="PF00295">
    <property type="entry name" value="Glyco_hydro_28"/>
    <property type="match status" value="1"/>
</dbReference>
<dbReference type="SUPFAM" id="SSF51126">
    <property type="entry name" value="Pectin lyase-like"/>
    <property type="match status" value="1"/>
</dbReference>
<accession>A2RAY7</accession>
<accession>Q27UA7</accession>
<comment type="function">
    <text evidence="1">Specific in hydrolyzing the terminal glycosidic bond of polygalacturonic acid and oligogalacturonates.</text>
</comment>
<comment type="catalytic activity">
    <reaction>
        <text>[(1-&gt;4)-alpha-D-galacturonosyl](n) + H2O = alpha-D-galacturonate + [(1-&gt;4)-alpha-D-galacturonosyl](n-1)</text>
        <dbReference type="Rhea" id="RHEA:14117"/>
        <dbReference type="Rhea" id="RHEA-COMP:14570"/>
        <dbReference type="Rhea" id="RHEA-COMP:14572"/>
        <dbReference type="ChEBI" id="CHEBI:15377"/>
        <dbReference type="ChEBI" id="CHEBI:58658"/>
        <dbReference type="ChEBI" id="CHEBI:140523"/>
        <dbReference type="EC" id="3.2.1.67"/>
    </reaction>
</comment>
<comment type="subcellular location">
    <subcellularLocation>
        <location evidence="1">Secreted</location>
    </subcellularLocation>
</comment>
<comment type="induction">
    <text evidence="3">By rhamnose, galacturonic acid, polygalacturonic acid and sugar beet pectin.</text>
</comment>
<comment type="similarity">
    <text evidence="4">Belongs to the glycosyl hydrolase 28 family.</text>
</comment>
<feature type="signal peptide" evidence="2">
    <location>
        <begin position="1"/>
        <end position="20"/>
    </location>
</feature>
<feature type="chain" id="PRO_5000221344" description="Putative galacturan 1,4-alpha-galacturonidase C">
    <location>
        <begin position="21"/>
        <end position="423"/>
    </location>
</feature>
<feature type="repeat" description="PbH1 1">
    <location>
        <begin position="215"/>
        <end position="236"/>
    </location>
</feature>
<feature type="repeat" description="PbH1 2">
    <location>
        <begin position="238"/>
        <end position="258"/>
    </location>
</feature>
<feature type="active site" description="Proton donor" evidence="1">
    <location>
        <position position="229"/>
    </location>
</feature>
<feature type="glycosylation site" description="N-linked (GlcNAc...) asparagine" evidence="2">
    <location>
        <position position="92"/>
    </location>
</feature>
<feature type="glycosylation site" description="N-linked (GlcNAc...) asparagine" evidence="2">
    <location>
        <position position="98"/>
    </location>
</feature>
<feature type="glycosylation site" description="N-linked (GlcNAc...) asparagine" evidence="2">
    <location>
        <position position="118"/>
    </location>
</feature>
<feature type="glycosylation site" description="N-linked (GlcNAc...) asparagine" evidence="2">
    <location>
        <position position="156"/>
    </location>
</feature>
<feature type="glycosylation site" description="N-linked (GlcNAc...) asparagine" evidence="2">
    <location>
        <position position="179"/>
    </location>
</feature>
<feature type="glycosylation site" description="N-linked (GlcNAc...) asparagine" evidence="2">
    <location>
        <position position="191"/>
    </location>
</feature>
<feature type="glycosylation site" description="N-linked (GlcNAc...) asparagine" evidence="2">
    <location>
        <position position="245"/>
    </location>
</feature>
<feature type="glycosylation site" description="N-linked (GlcNAc...) asparagine" evidence="2">
    <location>
        <position position="344"/>
    </location>
</feature>
<feature type="glycosylation site" description="N-linked (GlcNAc...) asparagine" evidence="2">
    <location>
        <position position="362"/>
    </location>
</feature>
<feature type="glycosylation site" description="N-linked (GlcNAc...) asparagine" evidence="2">
    <location>
        <position position="400"/>
    </location>
</feature>
<feature type="disulfide bond" evidence="1">
    <location>
        <begin position="231"/>
        <end position="248"/>
    </location>
</feature>
<feature type="disulfide bond" evidence="1">
    <location>
        <begin position="379"/>
        <end position="385"/>
    </location>
</feature>
<gene>
    <name type="primary">rgxC</name>
    <name type="ORF">An18g04810</name>
</gene>